<keyword id="KW-0030">Aminoacyl-tRNA synthetase</keyword>
<keyword id="KW-0067">ATP-binding</keyword>
<keyword id="KW-0963">Cytoplasm</keyword>
<keyword id="KW-0436">Ligase</keyword>
<keyword id="KW-0479">Metal-binding</keyword>
<keyword id="KW-0547">Nucleotide-binding</keyword>
<keyword id="KW-0648">Protein biosynthesis</keyword>
<keyword id="KW-1185">Reference proteome</keyword>
<keyword id="KW-0862">Zinc</keyword>
<organism>
    <name type="scientific">Teredinibacter turnerae (strain ATCC 39867 / T7901)</name>
    <dbReference type="NCBI Taxonomy" id="377629"/>
    <lineage>
        <taxon>Bacteria</taxon>
        <taxon>Pseudomonadati</taxon>
        <taxon>Pseudomonadota</taxon>
        <taxon>Gammaproteobacteria</taxon>
        <taxon>Cellvibrionales</taxon>
        <taxon>Cellvibrionaceae</taxon>
        <taxon>Teredinibacter</taxon>
    </lineage>
</organism>
<gene>
    <name evidence="1" type="primary">ileS</name>
    <name type="ordered locus">TERTU_1040</name>
</gene>
<name>SYI_TERTT</name>
<feature type="chain" id="PRO_1000216247" description="Isoleucine--tRNA ligase">
    <location>
        <begin position="1"/>
        <end position="934"/>
    </location>
</feature>
<feature type="short sequence motif" description="'HIGH' region">
    <location>
        <begin position="58"/>
        <end position="68"/>
    </location>
</feature>
<feature type="short sequence motif" description="'KMSKS' region">
    <location>
        <begin position="600"/>
        <end position="604"/>
    </location>
</feature>
<feature type="binding site" evidence="1">
    <location>
        <position position="559"/>
    </location>
    <ligand>
        <name>L-isoleucyl-5'-AMP</name>
        <dbReference type="ChEBI" id="CHEBI:178002"/>
    </ligand>
</feature>
<feature type="binding site" evidence="1">
    <location>
        <position position="603"/>
    </location>
    <ligand>
        <name>ATP</name>
        <dbReference type="ChEBI" id="CHEBI:30616"/>
    </ligand>
</feature>
<feature type="binding site" evidence="1">
    <location>
        <position position="897"/>
    </location>
    <ligand>
        <name>Zn(2+)</name>
        <dbReference type="ChEBI" id="CHEBI:29105"/>
    </ligand>
</feature>
<feature type="binding site" evidence="1">
    <location>
        <position position="900"/>
    </location>
    <ligand>
        <name>Zn(2+)</name>
        <dbReference type="ChEBI" id="CHEBI:29105"/>
    </ligand>
</feature>
<feature type="binding site" evidence="1">
    <location>
        <position position="917"/>
    </location>
    <ligand>
        <name>Zn(2+)</name>
        <dbReference type="ChEBI" id="CHEBI:29105"/>
    </ligand>
</feature>
<feature type="binding site" evidence="1">
    <location>
        <position position="920"/>
    </location>
    <ligand>
        <name>Zn(2+)</name>
        <dbReference type="ChEBI" id="CHEBI:29105"/>
    </ligand>
</feature>
<reference key="1">
    <citation type="journal article" date="2009" name="PLoS ONE">
        <title>The complete genome of Teredinibacter turnerae T7901: an intracellular endosymbiont of marine wood-boring bivalves (shipworms).</title>
        <authorList>
            <person name="Yang J.C."/>
            <person name="Madupu R."/>
            <person name="Durkin A.S."/>
            <person name="Ekborg N.A."/>
            <person name="Pedamallu C.S."/>
            <person name="Hostetler J.B."/>
            <person name="Radune D."/>
            <person name="Toms B.S."/>
            <person name="Henrissat B."/>
            <person name="Coutinho P.M."/>
            <person name="Schwarz S."/>
            <person name="Field L."/>
            <person name="Trindade-Silva A.E."/>
            <person name="Soares C.A.G."/>
            <person name="Elshahawi S."/>
            <person name="Hanora A."/>
            <person name="Schmidt E.W."/>
            <person name="Haygood M.G."/>
            <person name="Posfai J."/>
            <person name="Benner J."/>
            <person name="Madinger C."/>
            <person name="Nove J."/>
            <person name="Anton B."/>
            <person name="Chaudhary K."/>
            <person name="Foster J."/>
            <person name="Holman A."/>
            <person name="Kumar S."/>
            <person name="Lessard P.A."/>
            <person name="Luyten Y.A."/>
            <person name="Slatko B."/>
            <person name="Wood N."/>
            <person name="Wu B."/>
            <person name="Teplitski M."/>
            <person name="Mougous J.D."/>
            <person name="Ward N."/>
            <person name="Eisen J.A."/>
            <person name="Badger J.H."/>
            <person name="Distel D.L."/>
        </authorList>
    </citation>
    <scope>NUCLEOTIDE SEQUENCE [LARGE SCALE GENOMIC DNA]</scope>
    <source>
        <strain>ATCC 39867 / T7901</strain>
    </source>
</reference>
<comment type="function">
    <text evidence="1">Catalyzes the attachment of isoleucine to tRNA(Ile). As IleRS can inadvertently accommodate and process structurally similar amino acids such as valine, to avoid such errors it has two additional distinct tRNA(Ile)-dependent editing activities. One activity is designated as 'pretransfer' editing and involves the hydrolysis of activated Val-AMP. The other activity is designated 'posttransfer' editing and involves deacylation of mischarged Val-tRNA(Ile).</text>
</comment>
<comment type="catalytic activity">
    <reaction evidence="1">
        <text>tRNA(Ile) + L-isoleucine + ATP = L-isoleucyl-tRNA(Ile) + AMP + diphosphate</text>
        <dbReference type="Rhea" id="RHEA:11060"/>
        <dbReference type="Rhea" id="RHEA-COMP:9666"/>
        <dbReference type="Rhea" id="RHEA-COMP:9695"/>
        <dbReference type="ChEBI" id="CHEBI:30616"/>
        <dbReference type="ChEBI" id="CHEBI:33019"/>
        <dbReference type="ChEBI" id="CHEBI:58045"/>
        <dbReference type="ChEBI" id="CHEBI:78442"/>
        <dbReference type="ChEBI" id="CHEBI:78528"/>
        <dbReference type="ChEBI" id="CHEBI:456215"/>
        <dbReference type="EC" id="6.1.1.5"/>
    </reaction>
</comment>
<comment type="cofactor">
    <cofactor evidence="1">
        <name>Zn(2+)</name>
        <dbReference type="ChEBI" id="CHEBI:29105"/>
    </cofactor>
    <text evidence="1">Binds 1 zinc ion per subunit.</text>
</comment>
<comment type="subunit">
    <text evidence="1">Monomer.</text>
</comment>
<comment type="subcellular location">
    <subcellularLocation>
        <location evidence="1">Cytoplasm</location>
    </subcellularLocation>
</comment>
<comment type="domain">
    <text evidence="1">IleRS has two distinct active sites: one for aminoacylation and one for editing. The misactivated valine is translocated from the active site to the editing site, which sterically excludes the correctly activated isoleucine. The single editing site contains two valyl binding pockets, one specific for each substrate (Val-AMP or Val-tRNA(Ile)).</text>
</comment>
<comment type="similarity">
    <text evidence="1">Belongs to the class-I aminoacyl-tRNA synthetase family. IleS type 1 subfamily.</text>
</comment>
<proteinExistence type="inferred from homology"/>
<accession>C5BQX2</accession>
<protein>
    <recommendedName>
        <fullName evidence="1">Isoleucine--tRNA ligase</fullName>
        <ecNumber evidence="1">6.1.1.5</ecNumber>
    </recommendedName>
    <alternativeName>
        <fullName evidence="1">Isoleucyl-tRNA synthetase</fullName>
        <shortName evidence="1">IleRS</shortName>
    </alternativeName>
</protein>
<sequence>MTDYKSTLNLPQTSFAMKANLAQREPQTLKRWQKENLYQQIRQARAGREKFILHDGPPYANGEIHIGHAVNKILKDIIVKAKTLSGFDAPYIPGWDCHGLPIEHNVEKKVGKAGVKVDFATFRKKCREYAAKQVAGQKEGFVRLGVLADWDKPYLTMDYKTEADIVRALGKIVANGHLVRGFKPVYWSVVGGSALAEAEVEYQEKTSFSIDVKYAVKDEADFTQRVAELGGEGPVSVVIWTTTPWTLPSSQAVSLNADLEYVVVQQPGARLLVAEALLESVGKRAGIDTATIVGRCHGRDLENLVLQHPFYTREVPVILGDHVTTDAGTGCVHTAPDHGMEDFEVGSRYGIGTLNYVDENGLYRESVEIFAGDHVYKVDEKIIELLESRDALLHQEKFTHSYPHCWRTKTPLIFRATPQWFISMTKNGLLDTVKTAVDGVEWIPDWGEARMRSMLEASPDWCISRQRTWGVPIALFVHKETQDLHPDTPALVEKVAALIETDGMDAWFNLNPEEILGEDAANYSKVTDTLDVWFDSGVTHYSVIQQREELQYPADLYLEGSDQHRGWFQSSLKTAIAINGTAPYKQVLTHGFTVDANGKKMSKSIGNTVSPQKVMNELGADVLRLWVAATDFSGDMSVSDEILMRTADSYRRIRNTMRYFMSNLNGFDPAINSVAFDDMVALDRWAVDRAAKLQRDIVACYDSYQFHTIYQKIHNFCIVDMGGFYLDIIKDRVYTMQEDSRARRSAQTAQYLIVQALVRWIAPILSFTADEIWQALPGEKTGPVFVAEWLELPELSEDDALNNSYWQTAAKVKTAVNKVLESKRSSGVIGGSLGAEVTLYASDELHAKLNSLGEELRFVLLVSAVNLKKLDEAPEDADQVDVVGLKVAVTKSEAAKCARCWHQRDDVGSHSEHPELCGRCVSNVEGNGEVRHYA</sequence>
<dbReference type="EC" id="6.1.1.5" evidence="1"/>
<dbReference type="EMBL" id="CP001614">
    <property type="protein sequence ID" value="ACR11703.1"/>
    <property type="molecule type" value="Genomic_DNA"/>
</dbReference>
<dbReference type="RefSeq" id="WP_015817815.1">
    <property type="nucleotide sequence ID" value="NC_012997.1"/>
</dbReference>
<dbReference type="SMR" id="C5BQX2"/>
<dbReference type="STRING" id="377629.TERTU_1040"/>
<dbReference type="KEGG" id="ttu:TERTU_1040"/>
<dbReference type="eggNOG" id="COG0060">
    <property type="taxonomic scope" value="Bacteria"/>
</dbReference>
<dbReference type="HOGENOM" id="CLU_001493_7_0_6"/>
<dbReference type="OrthoDB" id="9810365at2"/>
<dbReference type="Proteomes" id="UP000009080">
    <property type="component" value="Chromosome"/>
</dbReference>
<dbReference type="GO" id="GO:0005829">
    <property type="term" value="C:cytosol"/>
    <property type="evidence" value="ECO:0007669"/>
    <property type="project" value="TreeGrafter"/>
</dbReference>
<dbReference type="GO" id="GO:0002161">
    <property type="term" value="F:aminoacyl-tRNA deacylase activity"/>
    <property type="evidence" value="ECO:0007669"/>
    <property type="project" value="InterPro"/>
</dbReference>
<dbReference type="GO" id="GO:0005524">
    <property type="term" value="F:ATP binding"/>
    <property type="evidence" value="ECO:0007669"/>
    <property type="project" value="UniProtKB-UniRule"/>
</dbReference>
<dbReference type="GO" id="GO:0004822">
    <property type="term" value="F:isoleucine-tRNA ligase activity"/>
    <property type="evidence" value="ECO:0007669"/>
    <property type="project" value="UniProtKB-UniRule"/>
</dbReference>
<dbReference type="GO" id="GO:0000049">
    <property type="term" value="F:tRNA binding"/>
    <property type="evidence" value="ECO:0007669"/>
    <property type="project" value="InterPro"/>
</dbReference>
<dbReference type="GO" id="GO:0008270">
    <property type="term" value="F:zinc ion binding"/>
    <property type="evidence" value="ECO:0007669"/>
    <property type="project" value="UniProtKB-UniRule"/>
</dbReference>
<dbReference type="GO" id="GO:0006428">
    <property type="term" value="P:isoleucyl-tRNA aminoacylation"/>
    <property type="evidence" value="ECO:0007669"/>
    <property type="project" value="UniProtKB-UniRule"/>
</dbReference>
<dbReference type="CDD" id="cd07960">
    <property type="entry name" value="Anticodon_Ia_Ile_BEm"/>
    <property type="match status" value="1"/>
</dbReference>
<dbReference type="CDD" id="cd00818">
    <property type="entry name" value="IleRS_core"/>
    <property type="match status" value="1"/>
</dbReference>
<dbReference type="FunFam" id="1.10.730.20:FF:000001">
    <property type="entry name" value="Isoleucine--tRNA ligase"/>
    <property type="match status" value="1"/>
</dbReference>
<dbReference type="FunFam" id="3.40.50.620:FF:000048">
    <property type="entry name" value="Isoleucine--tRNA ligase"/>
    <property type="match status" value="1"/>
</dbReference>
<dbReference type="FunFam" id="3.40.50.620:FF:000168">
    <property type="entry name" value="Isoleucine--tRNA ligase"/>
    <property type="match status" value="1"/>
</dbReference>
<dbReference type="Gene3D" id="1.10.730.20">
    <property type="match status" value="1"/>
</dbReference>
<dbReference type="Gene3D" id="3.40.50.620">
    <property type="entry name" value="HUPs"/>
    <property type="match status" value="2"/>
</dbReference>
<dbReference type="Gene3D" id="1.10.10.830">
    <property type="entry name" value="Ile-tRNA synthetase CP2 domain-like"/>
    <property type="match status" value="1"/>
</dbReference>
<dbReference type="HAMAP" id="MF_02002">
    <property type="entry name" value="Ile_tRNA_synth_type1"/>
    <property type="match status" value="1"/>
</dbReference>
<dbReference type="InterPro" id="IPR001412">
    <property type="entry name" value="aa-tRNA-synth_I_CS"/>
</dbReference>
<dbReference type="InterPro" id="IPR002300">
    <property type="entry name" value="aa-tRNA-synth_Ia"/>
</dbReference>
<dbReference type="InterPro" id="IPR033708">
    <property type="entry name" value="Anticodon_Ile_BEm"/>
</dbReference>
<dbReference type="InterPro" id="IPR002301">
    <property type="entry name" value="Ile-tRNA-ligase"/>
</dbReference>
<dbReference type="InterPro" id="IPR023585">
    <property type="entry name" value="Ile-tRNA-ligase_type1"/>
</dbReference>
<dbReference type="InterPro" id="IPR050081">
    <property type="entry name" value="Ile-tRNA_ligase"/>
</dbReference>
<dbReference type="InterPro" id="IPR013155">
    <property type="entry name" value="M/V/L/I-tRNA-synth_anticd-bd"/>
</dbReference>
<dbReference type="InterPro" id="IPR014729">
    <property type="entry name" value="Rossmann-like_a/b/a_fold"/>
</dbReference>
<dbReference type="InterPro" id="IPR009080">
    <property type="entry name" value="tRNAsynth_Ia_anticodon-bd"/>
</dbReference>
<dbReference type="InterPro" id="IPR009008">
    <property type="entry name" value="Val/Leu/Ile-tRNA-synth_edit"/>
</dbReference>
<dbReference type="InterPro" id="IPR010663">
    <property type="entry name" value="Znf_FPG/IleRS"/>
</dbReference>
<dbReference type="NCBIfam" id="TIGR00392">
    <property type="entry name" value="ileS"/>
    <property type="match status" value="1"/>
</dbReference>
<dbReference type="PANTHER" id="PTHR42765:SF1">
    <property type="entry name" value="ISOLEUCINE--TRNA LIGASE, MITOCHONDRIAL"/>
    <property type="match status" value="1"/>
</dbReference>
<dbReference type="PANTHER" id="PTHR42765">
    <property type="entry name" value="SOLEUCYL-TRNA SYNTHETASE"/>
    <property type="match status" value="1"/>
</dbReference>
<dbReference type="Pfam" id="PF08264">
    <property type="entry name" value="Anticodon_1"/>
    <property type="match status" value="1"/>
</dbReference>
<dbReference type="Pfam" id="PF00133">
    <property type="entry name" value="tRNA-synt_1"/>
    <property type="match status" value="1"/>
</dbReference>
<dbReference type="Pfam" id="PF06827">
    <property type="entry name" value="zf-FPG_IleRS"/>
    <property type="match status" value="1"/>
</dbReference>
<dbReference type="PRINTS" id="PR00984">
    <property type="entry name" value="TRNASYNTHILE"/>
</dbReference>
<dbReference type="SUPFAM" id="SSF47323">
    <property type="entry name" value="Anticodon-binding domain of a subclass of class I aminoacyl-tRNA synthetases"/>
    <property type="match status" value="1"/>
</dbReference>
<dbReference type="SUPFAM" id="SSF52374">
    <property type="entry name" value="Nucleotidylyl transferase"/>
    <property type="match status" value="1"/>
</dbReference>
<dbReference type="SUPFAM" id="SSF50677">
    <property type="entry name" value="ValRS/IleRS/LeuRS editing domain"/>
    <property type="match status" value="1"/>
</dbReference>
<dbReference type="PROSITE" id="PS00178">
    <property type="entry name" value="AA_TRNA_LIGASE_I"/>
    <property type="match status" value="1"/>
</dbReference>
<evidence type="ECO:0000255" key="1">
    <source>
        <dbReference type="HAMAP-Rule" id="MF_02002"/>
    </source>
</evidence>